<evidence type="ECO:0000255" key="1">
    <source>
        <dbReference type="PROSITE-ProRule" id="PRU00238"/>
    </source>
</evidence>
<sequence length="147" mass="16225">MVHFTAEEKAAITSTWKLVDVEDAGAEALGRLLVVYPWTQRFFDSFGNLSSSSAIMGNPKVKAHGKKVLTAFGDAVKNVDDLKNTFAHLSELHCDRLHVDPENFKLLGNVLVIVLAKYFGKEFTPQVQSAWQKLVAGVATALAHKYH</sequence>
<comment type="function">
    <text>This protein functions as an embryonic globin, but the gene structure and chromosomal location resemble more closely the human gamma chain gene, which codes for a fetal globin.</text>
</comment>
<comment type="subunit">
    <text>Heterotetramer of two alpha chains and two gamma chains.</text>
</comment>
<comment type="tissue specificity">
    <text>Red blood cells.</text>
</comment>
<comment type="similarity">
    <text evidence="1">Belongs to the globin family.</text>
</comment>
<gene>
    <name type="primary">HBG</name>
</gene>
<accession>P02099</accession>
<protein>
    <recommendedName>
        <fullName>Hemoglobin subunit gamma</fullName>
    </recommendedName>
    <alternativeName>
        <fullName>Gamma-globin</fullName>
    </alternativeName>
    <alternativeName>
        <fullName>Hemoglobin beta-3</fullName>
    </alternativeName>
    <alternativeName>
        <fullName>Hemoglobin gamma chain</fullName>
    </alternativeName>
</protein>
<keyword id="KW-0349">Heme</keyword>
<keyword id="KW-0408">Iron</keyword>
<keyword id="KW-0479">Metal-binding</keyword>
<keyword id="KW-0561">Oxygen transport</keyword>
<keyword id="KW-1185">Reference proteome</keyword>
<keyword id="KW-0813">Transport</keyword>
<proteinExistence type="evidence at transcript level"/>
<organism>
    <name type="scientific">Oryctolagus cuniculus</name>
    <name type="common">Rabbit</name>
    <dbReference type="NCBI Taxonomy" id="9986"/>
    <lineage>
        <taxon>Eukaryota</taxon>
        <taxon>Metazoa</taxon>
        <taxon>Chordata</taxon>
        <taxon>Craniata</taxon>
        <taxon>Vertebrata</taxon>
        <taxon>Euteleostomi</taxon>
        <taxon>Mammalia</taxon>
        <taxon>Eutheria</taxon>
        <taxon>Euarchontoglires</taxon>
        <taxon>Glires</taxon>
        <taxon>Lagomorpha</taxon>
        <taxon>Leporidae</taxon>
        <taxon>Oryctolagus</taxon>
    </lineage>
</organism>
<dbReference type="EMBL" id="M18818">
    <property type="protein sequence ID" value="AAA02984.1"/>
    <property type="molecule type" value="Unassigned_DNA"/>
</dbReference>
<dbReference type="EMBL" id="V00883">
    <property type="protein sequence ID" value="CAA24252.1"/>
    <property type="molecule type" value="Genomic_DNA"/>
</dbReference>
<dbReference type="PIR" id="A02417">
    <property type="entry name" value="HBRB3"/>
</dbReference>
<dbReference type="RefSeq" id="NP_001164974.1">
    <property type="nucleotide sequence ID" value="NM_001171503.1"/>
</dbReference>
<dbReference type="SMR" id="P02099"/>
<dbReference type="FunCoup" id="P02099">
    <property type="interactions" value="6"/>
</dbReference>
<dbReference type="PaxDb" id="9986-ENSOCUP00000017035"/>
<dbReference type="GeneID" id="100328858"/>
<dbReference type="KEGG" id="ocu:100328858"/>
<dbReference type="CTD" id="3048"/>
<dbReference type="eggNOG" id="KOG3378">
    <property type="taxonomic scope" value="Eukaryota"/>
</dbReference>
<dbReference type="HOGENOM" id="CLU_003827_10_0_1"/>
<dbReference type="InParanoid" id="P02099"/>
<dbReference type="OMA" id="NFKAMYA"/>
<dbReference type="OrthoDB" id="9886081at2759"/>
<dbReference type="TreeFam" id="TF333268"/>
<dbReference type="Proteomes" id="UP000001811">
    <property type="component" value="Unplaced"/>
</dbReference>
<dbReference type="ExpressionAtlas" id="P02099">
    <property type="expression patterns" value="baseline"/>
</dbReference>
<dbReference type="GO" id="GO:0072562">
    <property type="term" value="C:blood microparticle"/>
    <property type="evidence" value="ECO:0007669"/>
    <property type="project" value="TreeGrafter"/>
</dbReference>
<dbReference type="GO" id="GO:0031838">
    <property type="term" value="C:haptoglobin-hemoglobin complex"/>
    <property type="evidence" value="ECO:0007669"/>
    <property type="project" value="TreeGrafter"/>
</dbReference>
<dbReference type="GO" id="GO:0005833">
    <property type="term" value="C:hemoglobin complex"/>
    <property type="evidence" value="ECO:0007669"/>
    <property type="project" value="InterPro"/>
</dbReference>
<dbReference type="GO" id="GO:0031720">
    <property type="term" value="F:haptoglobin binding"/>
    <property type="evidence" value="ECO:0007669"/>
    <property type="project" value="TreeGrafter"/>
</dbReference>
<dbReference type="GO" id="GO:0020037">
    <property type="term" value="F:heme binding"/>
    <property type="evidence" value="ECO:0007669"/>
    <property type="project" value="InterPro"/>
</dbReference>
<dbReference type="GO" id="GO:0031721">
    <property type="term" value="F:hemoglobin alpha binding"/>
    <property type="evidence" value="ECO:0007669"/>
    <property type="project" value="TreeGrafter"/>
</dbReference>
<dbReference type="GO" id="GO:0046872">
    <property type="term" value="F:metal ion binding"/>
    <property type="evidence" value="ECO:0007669"/>
    <property type="project" value="UniProtKB-KW"/>
</dbReference>
<dbReference type="GO" id="GO:0043177">
    <property type="term" value="F:organic acid binding"/>
    <property type="evidence" value="ECO:0007669"/>
    <property type="project" value="TreeGrafter"/>
</dbReference>
<dbReference type="GO" id="GO:0019825">
    <property type="term" value="F:oxygen binding"/>
    <property type="evidence" value="ECO:0007669"/>
    <property type="project" value="InterPro"/>
</dbReference>
<dbReference type="GO" id="GO:0005344">
    <property type="term" value="F:oxygen carrier activity"/>
    <property type="evidence" value="ECO:0007669"/>
    <property type="project" value="UniProtKB-KW"/>
</dbReference>
<dbReference type="GO" id="GO:0004601">
    <property type="term" value="F:peroxidase activity"/>
    <property type="evidence" value="ECO:0007669"/>
    <property type="project" value="TreeGrafter"/>
</dbReference>
<dbReference type="GO" id="GO:0042744">
    <property type="term" value="P:hydrogen peroxide catabolic process"/>
    <property type="evidence" value="ECO:0007669"/>
    <property type="project" value="TreeGrafter"/>
</dbReference>
<dbReference type="CDD" id="cd08925">
    <property type="entry name" value="Hb-beta-like"/>
    <property type="match status" value="1"/>
</dbReference>
<dbReference type="FunFam" id="1.10.490.10:FF:000001">
    <property type="entry name" value="Hemoglobin subunit beta"/>
    <property type="match status" value="1"/>
</dbReference>
<dbReference type="Gene3D" id="1.10.490.10">
    <property type="entry name" value="Globins"/>
    <property type="match status" value="1"/>
</dbReference>
<dbReference type="InterPro" id="IPR000971">
    <property type="entry name" value="Globin"/>
</dbReference>
<dbReference type="InterPro" id="IPR009050">
    <property type="entry name" value="Globin-like_sf"/>
</dbReference>
<dbReference type="InterPro" id="IPR012292">
    <property type="entry name" value="Globin/Proto"/>
</dbReference>
<dbReference type="InterPro" id="IPR002337">
    <property type="entry name" value="Hemoglobin_b"/>
</dbReference>
<dbReference type="InterPro" id="IPR050056">
    <property type="entry name" value="Hemoglobin_oxygen_transport"/>
</dbReference>
<dbReference type="PANTHER" id="PTHR11442">
    <property type="entry name" value="HEMOGLOBIN FAMILY MEMBER"/>
    <property type="match status" value="1"/>
</dbReference>
<dbReference type="PANTHER" id="PTHR11442:SF7">
    <property type="entry name" value="HEMOGLOBIN SUBUNIT EPSILON"/>
    <property type="match status" value="1"/>
</dbReference>
<dbReference type="Pfam" id="PF00042">
    <property type="entry name" value="Globin"/>
    <property type="match status" value="1"/>
</dbReference>
<dbReference type="PRINTS" id="PR00814">
    <property type="entry name" value="BETAHAEM"/>
</dbReference>
<dbReference type="SUPFAM" id="SSF46458">
    <property type="entry name" value="Globin-like"/>
    <property type="match status" value="1"/>
</dbReference>
<dbReference type="PROSITE" id="PS01033">
    <property type="entry name" value="GLOBIN"/>
    <property type="match status" value="1"/>
</dbReference>
<reference key="1">
    <citation type="journal article" date="1981" name="J. Biol. Chem.">
        <title>The nucleotide sequence of rabbit embryonic globin gene beta 3.</title>
        <authorList>
            <person name="Hardison R.C."/>
        </authorList>
    </citation>
    <scope>NUCLEOTIDE SEQUENCE</scope>
</reference>
<reference key="2">
    <citation type="journal article" date="1989" name="J. Mol. Biol.">
        <title>Complete nucleotide sequence of the rabbit beta-like globin gene cluster. Analysis of intergenic sequences and comparison with the human beta-like globin gene cluster.</title>
        <authorList>
            <person name="Margot J.B."/>
            <person name="Demers G.W."/>
            <person name="Hardison R.C."/>
        </authorList>
    </citation>
    <scope>NUCLEOTIDE SEQUENCE</scope>
</reference>
<name>HBG_RABIT</name>
<feature type="chain" id="PRO_0000053267" description="Hemoglobin subunit gamma">
    <location>
        <begin position="1"/>
        <end position="147"/>
    </location>
</feature>
<feature type="domain" description="Globin" evidence="1">
    <location>
        <begin position="3"/>
        <end position="147"/>
    </location>
</feature>
<feature type="binding site" description="distal binding residue" evidence="1">
    <location>
        <position position="64"/>
    </location>
    <ligand>
        <name>heme b</name>
        <dbReference type="ChEBI" id="CHEBI:60344"/>
    </ligand>
    <ligandPart>
        <name>Fe</name>
        <dbReference type="ChEBI" id="CHEBI:18248"/>
    </ligandPart>
</feature>
<feature type="binding site" description="proximal binding residue" evidence="1">
    <location>
        <position position="93"/>
    </location>
    <ligand>
        <name>heme b</name>
        <dbReference type="ChEBI" id="CHEBI:60344"/>
    </ligand>
    <ligandPart>
        <name>Fe</name>
        <dbReference type="ChEBI" id="CHEBI:18248"/>
    </ligandPart>
</feature>